<sequence length="359" mass="38157">MQFIDQAEIQVRAGKGGDGIVAFRREKYVPAGGPAGGNGGPGGSVILRVNPQLQTLLDFHYTQLFKAEDGQRGGPKNMTGAAGNDRIIEVPAGTMVYDTETGALLGDLTDANQTLLVAKGGKGGLGNKFFLSNHNRAPDYALPGLEGEERSLRLELKLLAEVGIIGLPNAGKSTLISVLSAARPKIADYPFTTLVPNLGVVRPPNGDGVVFADIPGLIAGAHQGIGLGHDFLRHIERTRLLIHLIDSTAEDPLRDYVTIQTELEAYGHGLSDRPQIVVLNKIDALLPEDLTDLQARLQSEIHTPVFAISAIARTGLDALLHQIWQELEQLDLATEDASYPGSGAIEGLTPGLLSRGVVE</sequence>
<proteinExistence type="inferred from homology"/>
<feature type="chain" id="PRO_0000385871" description="GTPase Obg">
    <location>
        <begin position="1"/>
        <end position="359"/>
    </location>
</feature>
<feature type="domain" description="Obg" evidence="2">
    <location>
        <begin position="1"/>
        <end position="159"/>
    </location>
</feature>
<feature type="domain" description="OBG-type G" evidence="1">
    <location>
        <begin position="160"/>
        <end position="328"/>
    </location>
</feature>
<feature type="binding site" evidence="1">
    <location>
        <begin position="166"/>
        <end position="173"/>
    </location>
    <ligand>
        <name>GTP</name>
        <dbReference type="ChEBI" id="CHEBI:37565"/>
    </ligand>
</feature>
<feature type="binding site" evidence="1">
    <location>
        <position position="173"/>
    </location>
    <ligand>
        <name>Mg(2+)</name>
        <dbReference type="ChEBI" id="CHEBI:18420"/>
    </ligand>
</feature>
<feature type="binding site" evidence="1">
    <location>
        <begin position="191"/>
        <end position="195"/>
    </location>
    <ligand>
        <name>GTP</name>
        <dbReference type="ChEBI" id="CHEBI:37565"/>
    </ligand>
</feature>
<feature type="binding site" evidence="1">
    <location>
        <position position="193"/>
    </location>
    <ligand>
        <name>Mg(2+)</name>
        <dbReference type="ChEBI" id="CHEBI:18420"/>
    </ligand>
</feature>
<feature type="binding site" evidence="1">
    <location>
        <begin position="213"/>
        <end position="216"/>
    </location>
    <ligand>
        <name>GTP</name>
        <dbReference type="ChEBI" id="CHEBI:37565"/>
    </ligand>
</feature>
<feature type="binding site" evidence="1">
    <location>
        <begin position="280"/>
        <end position="283"/>
    </location>
    <ligand>
        <name>GTP</name>
        <dbReference type="ChEBI" id="CHEBI:37565"/>
    </ligand>
</feature>
<feature type="binding site" evidence="1">
    <location>
        <begin position="309"/>
        <end position="311"/>
    </location>
    <ligand>
        <name>GTP</name>
        <dbReference type="ChEBI" id="CHEBI:37565"/>
    </ligand>
</feature>
<reference key="1">
    <citation type="journal article" date="2011" name="MBio">
        <title>Novel metabolic attributes of the genus Cyanothece, comprising a group of unicellular nitrogen-fixing Cyanobacteria.</title>
        <authorList>
            <person name="Bandyopadhyay A."/>
            <person name="Elvitigala T."/>
            <person name="Welsh E."/>
            <person name="Stockel J."/>
            <person name="Liberton M."/>
            <person name="Min H."/>
            <person name="Sherman L.A."/>
            <person name="Pakrasi H.B."/>
        </authorList>
    </citation>
    <scope>NUCLEOTIDE SEQUENCE [LARGE SCALE GENOMIC DNA]</scope>
    <source>
        <strain>PCC 7425 / ATCC 29141</strain>
    </source>
</reference>
<gene>
    <name evidence="1" type="primary">obg</name>
    <name type="ordered locus">Cyan7425_2049</name>
</gene>
<comment type="function">
    <text evidence="1">An essential GTPase which binds GTP, GDP and possibly (p)ppGpp with moderate affinity, with high nucleotide exchange rates and a fairly low GTP hydrolysis rate. Plays a role in control of the cell cycle, stress response, ribosome biogenesis and in those bacteria that undergo differentiation, in morphogenesis control.</text>
</comment>
<comment type="cofactor">
    <cofactor evidence="1">
        <name>Mg(2+)</name>
        <dbReference type="ChEBI" id="CHEBI:18420"/>
    </cofactor>
</comment>
<comment type="subunit">
    <text evidence="1">Monomer.</text>
</comment>
<comment type="subcellular location">
    <subcellularLocation>
        <location evidence="1">Cytoplasm</location>
    </subcellularLocation>
</comment>
<comment type="similarity">
    <text evidence="1">Belongs to the TRAFAC class OBG-HflX-like GTPase superfamily. OBG GTPase family.</text>
</comment>
<accession>B8HU67</accession>
<protein>
    <recommendedName>
        <fullName evidence="1">GTPase Obg</fullName>
        <ecNumber evidence="1">3.6.5.-</ecNumber>
    </recommendedName>
    <alternativeName>
        <fullName evidence="1">GTP-binding protein Obg</fullName>
    </alternativeName>
</protein>
<dbReference type="EC" id="3.6.5.-" evidence="1"/>
<dbReference type="EMBL" id="CP001344">
    <property type="protein sequence ID" value="ACL44412.1"/>
    <property type="molecule type" value="Genomic_DNA"/>
</dbReference>
<dbReference type="SMR" id="B8HU67"/>
<dbReference type="STRING" id="395961.Cyan7425_2049"/>
<dbReference type="KEGG" id="cyn:Cyan7425_2049"/>
<dbReference type="eggNOG" id="COG0536">
    <property type="taxonomic scope" value="Bacteria"/>
</dbReference>
<dbReference type="HOGENOM" id="CLU_011747_2_0_3"/>
<dbReference type="OrthoDB" id="9807318at2"/>
<dbReference type="GO" id="GO:0005737">
    <property type="term" value="C:cytoplasm"/>
    <property type="evidence" value="ECO:0007669"/>
    <property type="project" value="UniProtKB-SubCell"/>
</dbReference>
<dbReference type="GO" id="GO:0005525">
    <property type="term" value="F:GTP binding"/>
    <property type="evidence" value="ECO:0007669"/>
    <property type="project" value="UniProtKB-UniRule"/>
</dbReference>
<dbReference type="GO" id="GO:0003924">
    <property type="term" value="F:GTPase activity"/>
    <property type="evidence" value="ECO:0007669"/>
    <property type="project" value="UniProtKB-UniRule"/>
</dbReference>
<dbReference type="GO" id="GO:0000287">
    <property type="term" value="F:magnesium ion binding"/>
    <property type="evidence" value="ECO:0007669"/>
    <property type="project" value="InterPro"/>
</dbReference>
<dbReference type="GO" id="GO:0042254">
    <property type="term" value="P:ribosome biogenesis"/>
    <property type="evidence" value="ECO:0007669"/>
    <property type="project" value="UniProtKB-UniRule"/>
</dbReference>
<dbReference type="CDD" id="cd01898">
    <property type="entry name" value="Obg"/>
    <property type="match status" value="1"/>
</dbReference>
<dbReference type="FunFam" id="2.70.210.12:FF:000001">
    <property type="entry name" value="GTPase Obg"/>
    <property type="match status" value="1"/>
</dbReference>
<dbReference type="Gene3D" id="2.70.210.12">
    <property type="entry name" value="GTP1/OBG domain"/>
    <property type="match status" value="1"/>
</dbReference>
<dbReference type="Gene3D" id="3.40.50.300">
    <property type="entry name" value="P-loop containing nucleotide triphosphate hydrolases"/>
    <property type="match status" value="1"/>
</dbReference>
<dbReference type="HAMAP" id="MF_01454">
    <property type="entry name" value="GTPase_Obg"/>
    <property type="match status" value="1"/>
</dbReference>
<dbReference type="InterPro" id="IPR031167">
    <property type="entry name" value="G_OBG"/>
</dbReference>
<dbReference type="InterPro" id="IPR006073">
    <property type="entry name" value="GTP-bd"/>
</dbReference>
<dbReference type="InterPro" id="IPR014100">
    <property type="entry name" value="GTP-bd_Obg/CgtA"/>
</dbReference>
<dbReference type="InterPro" id="IPR006169">
    <property type="entry name" value="GTP1_OBG_dom"/>
</dbReference>
<dbReference type="InterPro" id="IPR036726">
    <property type="entry name" value="GTP1_OBG_dom_sf"/>
</dbReference>
<dbReference type="InterPro" id="IPR045086">
    <property type="entry name" value="OBG_GTPase"/>
</dbReference>
<dbReference type="InterPro" id="IPR027417">
    <property type="entry name" value="P-loop_NTPase"/>
</dbReference>
<dbReference type="NCBIfam" id="TIGR02729">
    <property type="entry name" value="Obg_CgtA"/>
    <property type="match status" value="1"/>
</dbReference>
<dbReference type="NCBIfam" id="NF008954">
    <property type="entry name" value="PRK12296.1"/>
    <property type="match status" value="1"/>
</dbReference>
<dbReference type="NCBIfam" id="NF008955">
    <property type="entry name" value="PRK12297.1"/>
    <property type="match status" value="1"/>
</dbReference>
<dbReference type="NCBIfam" id="NF008956">
    <property type="entry name" value="PRK12299.1"/>
    <property type="match status" value="1"/>
</dbReference>
<dbReference type="PANTHER" id="PTHR11702">
    <property type="entry name" value="DEVELOPMENTALLY REGULATED GTP-BINDING PROTEIN-RELATED"/>
    <property type="match status" value="1"/>
</dbReference>
<dbReference type="PANTHER" id="PTHR11702:SF31">
    <property type="entry name" value="MITOCHONDRIAL RIBOSOME-ASSOCIATED GTPASE 2"/>
    <property type="match status" value="1"/>
</dbReference>
<dbReference type="Pfam" id="PF01018">
    <property type="entry name" value="GTP1_OBG"/>
    <property type="match status" value="1"/>
</dbReference>
<dbReference type="Pfam" id="PF01926">
    <property type="entry name" value="MMR_HSR1"/>
    <property type="match status" value="1"/>
</dbReference>
<dbReference type="PIRSF" id="PIRSF002401">
    <property type="entry name" value="GTP_bd_Obg/CgtA"/>
    <property type="match status" value="1"/>
</dbReference>
<dbReference type="PRINTS" id="PR00326">
    <property type="entry name" value="GTP1OBG"/>
</dbReference>
<dbReference type="SUPFAM" id="SSF82051">
    <property type="entry name" value="Obg GTP-binding protein N-terminal domain"/>
    <property type="match status" value="1"/>
</dbReference>
<dbReference type="SUPFAM" id="SSF52540">
    <property type="entry name" value="P-loop containing nucleoside triphosphate hydrolases"/>
    <property type="match status" value="1"/>
</dbReference>
<dbReference type="PROSITE" id="PS51710">
    <property type="entry name" value="G_OBG"/>
    <property type="match status" value="1"/>
</dbReference>
<dbReference type="PROSITE" id="PS51883">
    <property type="entry name" value="OBG"/>
    <property type="match status" value="1"/>
</dbReference>
<name>OBG_CYAP4</name>
<keyword id="KW-0963">Cytoplasm</keyword>
<keyword id="KW-0342">GTP-binding</keyword>
<keyword id="KW-0378">Hydrolase</keyword>
<keyword id="KW-0460">Magnesium</keyword>
<keyword id="KW-0479">Metal-binding</keyword>
<keyword id="KW-0547">Nucleotide-binding</keyword>
<organism>
    <name type="scientific">Cyanothece sp. (strain PCC 7425 / ATCC 29141)</name>
    <dbReference type="NCBI Taxonomy" id="395961"/>
    <lineage>
        <taxon>Bacteria</taxon>
        <taxon>Bacillati</taxon>
        <taxon>Cyanobacteriota</taxon>
        <taxon>Cyanophyceae</taxon>
        <taxon>Gomontiellales</taxon>
        <taxon>Cyanothecaceae</taxon>
        <taxon>Cyanothece</taxon>
    </lineage>
</organism>
<evidence type="ECO:0000255" key="1">
    <source>
        <dbReference type="HAMAP-Rule" id="MF_01454"/>
    </source>
</evidence>
<evidence type="ECO:0000255" key="2">
    <source>
        <dbReference type="PROSITE-ProRule" id="PRU01231"/>
    </source>
</evidence>